<accession>Q8G7B2</accession>
<name>ATPG_BIFLO</name>
<proteinExistence type="inferred from homology"/>
<reference key="1">
    <citation type="journal article" date="2002" name="Proc. Natl. Acad. Sci. U.S.A.">
        <title>The genome sequence of Bifidobacterium longum reflects its adaptation to the human gastrointestinal tract.</title>
        <authorList>
            <person name="Schell M.A."/>
            <person name="Karmirantzou M."/>
            <person name="Snel B."/>
            <person name="Vilanova D."/>
            <person name="Berger B."/>
            <person name="Pessi G."/>
            <person name="Zwahlen M.-C."/>
            <person name="Desiere F."/>
            <person name="Bork P."/>
            <person name="Delley M."/>
            <person name="Pridmore R.D."/>
            <person name="Arigoni F."/>
        </authorList>
    </citation>
    <scope>NUCLEOTIDE SEQUENCE [LARGE SCALE GENOMIC DNA]</scope>
    <source>
        <strain>NCC 2705</strain>
    </source>
</reference>
<dbReference type="EMBL" id="AE014295">
    <property type="protein sequence ID" value="AAN24196.1"/>
    <property type="molecule type" value="Genomic_DNA"/>
</dbReference>
<dbReference type="RefSeq" id="NP_695560.1">
    <property type="nucleotide sequence ID" value="NC_004307.2"/>
</dbReference>
<dbReference type="RefSeq" id="WP_007051479.1">
    <property type="nucleotide sequence ID" value="NC_004307.2"/>
</dbReference>
<dbReference type="SMR" id="Q8G7B2"/>
<dbReference type="STRING" id="206672.BL0358"/>
<dbReference type="EnsemblBacteria" id="AAN24196">
    <property type="protein sequence ID" value="AAN24196"/>
    <property type="gene ID" value="BL0358"/>
</dbReference>
<dbReference type="KEGG" id="blo:BL0358"/>
<dbReference type="PATRIC" id="fig|206672.9.peg.1094"/>
<dbReference type="HOGENOM" id="CLU_050669_0_0_11"/>
<dbReference type="OrthoDB" id="9812769at2"/>
<dbReference type="PhylomeDB" id="Q8G7B2"/>
<dbReference type="Proteomes" id="UP000000439">
    <property type="component" value="Chromosome"/>
</dbReference>
<dbReference type="GO" id="GO:0005886">
    <property type="term" value="C:plasma membrane"/>
    <property type="evidence" value="ECO:0007669"/>
    <property type="project" value="UniProtKB-SubCell"/>
</dbReference>
<dbReference type="GO" id="GO:0045259">
    <property type="term" value="C:proton-transporting ATP synthase complex"/>
    <property type="evidence" value="ECO:0007669"/>
    <property type="project" value="UniProtKB-KW"/>
</dbReference>
<dbReference type="GO" id="GO:0005524">
    <property type="term" value="F:ATP binding"/>
    <property type="evidence" value="ECO:0007669"/>
    <property type="project" value="UniProtKB-UniRule"/>
</dbReference>
<dbReference type="GO" id="GO:0046933">
    <property type="term" value="F:proton-transporting ATP synthase activity, rotational mechanism"/>
    <property type="evidence" value="ECO:0007669"/>
    <property type="project" value="UniProtKB-UniRule"/>
</dbReference>
<dbReference type="GO" id="GO:0042777">
    <property type="term" value="P:proton motive force-driven plasma membrane ATP synthesis"/>
    <property type="evidence" value="ECO:0007669"/>
    <property type="project" value="UniProtKB-UniRule"/>
</dbReference>
<dbReference type="CDD" id="cd12151">
    <property type="entry name" value="F1-ATPase_gamma"/>
    <property type="match status" value="1"/>
</dbReference>
<dbReference type="Gene3D" id="3.40.1380.10">
    <property type="match status" value="1"/>
</dbReference>
<dbReference type="Gene3D" id="1.10.287.80">
    <property type="entry name" value="ATP synthase, gamma subunit, helix hairpin domain"/>
    <property type="match status" value="2"/>
</dbReference>
<dbReference type="HAMAP" id="MF_00815">
    <property type="entry name" value="ATP_synth_gamma_bact"/>
    <property type="match status" value="1"/>
</dbReference>
<dbReference type="InterPro" id="IPR035968">
    <property type="entry name" value="ATP_synth_F1_ATPase_gsu"/>
</dbReference>
<dbReference type="InterPro" id="IPR000131">
    <property type="entry name" value="ATP_synth_F1_gsu"/>
</dbReference>
<dbReference type="NCBIfam" id="TIGR01146">
    <property type="entry name" value="ATPsyn_F1gamma"/>
    <property type="match status" value="1"/>
</dbReference>
<dbReference type="NCBIfam" id="NF004145">
    <property type="entry name" value="PRK05621.1-2"/>
    <property type="match status" value="1"/>
</dbReference>
<dbReference type="PANTHER" id="PTHR11693">
    <property type="entry name" value="ATP SYNTHASE GAMMA CHAIN"/>
    <property type="match status" value="1"/>
</dbReference>
<dbReference type="PANTHER" id="PTHR11693:SF22">
    <property type="entry name" value="ATP SYNTHASE SUBUNIT GAMMA, MITOCHONDRIAL"/>
    <property type="match status" value="1"/>
</dbReference>
<dbReference type="Pfam" id="PF00231">
    <property type="entry name" value="ATP-synt"/>
    <property type="match status" value="1"/>
</dbReference>
<dbReference type="PRINTS" id="PR00126">
    <property type="entry name" value="ATPASEGAMMA"/>
</dbReference>
<dbReference type="SUPFAM" id="SSF52943">
    <property type="entry name" value="ATP synthase (F1-ATPase), gamma subunit"/>
    <property type="match status" value="1"/>
</dbReference>
<protein>
    <recommendedName>
        <fullName evidence="1">ATP synthase gamma chain</fullName>
    </recommendedName>
    <alternativeName>
        <fullName evidence="1">ATP synthase F1 sector gamma subunit</fullName>
    </alternativeName>
    <alternativeName>
        <fullName evidence="1">F-ATPase gamma subunit</fullName>
    </alternativeName>
</protein>
<sequence>MGSQLALKSRIRSTESLAKIFNAQEMIASSHIAKARDVALNAKPYTDAIFDAVQALVAHTHITHPIAVKDEKNPRVAVLALTSDRGMAGPYTSSIIRETESLLSRLDAAGKQPELFVYGRRGSTYYKYRNRDIAATWEGDTDQPGVEIAETISNTLMDAYMKPAEKGGVSELYIVYTEFINMVVQKVRVLRMLPVEIVKNETKVPDPDEEAPATADVAPLYTFEPSLEKVLDAILPKYIQSRIHECLLTAAASETASRQNAMHTATDNARNLIDDLTRKLNASRQASITQELTEIIGSADALTKKEE</sequence>
<comment type="function">
    <text evidence="1">Produces ATP from ADP in the presence of a proton gradient across the membrane. The gamma chain is believed to be important in regulating ATPase activity and the flow of protons through the CF(0) complex.</text>
</comment>
<comment type="subunit">
    <text evidence="1">F-type ATPases have 2 components, CF(1) - the catalytic core - and CF(0) - the membrane proton channel. CF(1) has five subunits: alpha(3), beta(3), gamma(1), delta(1), epsilon(1). CF(0) has three main subunits: a, b and c.</text>
</comment>
<comment type="subcellular location">
    <subcellularLocation>
        <location evidence="1">Cell membrane</location>
        <topology evidence="1">Peripheral membrane protein</topology>
    </subcellularLocation>
</comment>
<comment type="similarity">
    <text evidence="1">Belongs to the ATPase gamma chain family.</text>
</comment>
<gene>
    <name evidence="1" type="primary">atpG</name>
    <name type="ordered locus">BL0358</name>
</gene>
<organism>
    <name type="scientific">Bifidobacterium longum (strain NCC 2705)</name>
    <dbReference type="NCBI Taxonomy" id="206672"/>
    <lineage>
        <taxon>Bacteria</taxon>
        <taxon>Bacillati</taxon>
        <taxon>Actinomycetota</taxon>
        <taxon>Actinomycetes</taxon>
        <taxon>Bifidobacteriales</taxon>
        <taxon>Bifidobacteriaceae</taxon>
        <taxon>Bifidobacterium</taxon>
    </lineage>
</organism>
<keyword id="KW-0066">ATP synthesis</keyword>
<keyword id="KW-1003">Cell membrane</keyword>
<keyword id="KW-0139">CF(1)</keyword>
<keyword id="KW-0375">Hydrogen ion transport</keyword>
<keyword id="KW-0406">Ion transport</keyword>
<keyword id="KW-0472">Membrane</keyword>
<keyword id="KW-1185">Reference proteome</keyword>
<keyword id="KW-0813">Transport</keyword>
<evidence type="ECO:0000255" key="1">
    <source>
        <dbReference type="HAMAP-Rule" id="MF_00815"/>
    </source>
</evidence>
<feature type="chain" id="PRO_0000073242" description="ATP synthase gamma chain">
    <location>
        <begin position="1"/>
        <end position="307"/>
    </location>
</feature>